<protein>
    <recommendedName>
        <fullName evidence="1">NH(3)-dependent NAD(+) synthetase</fullName>
        <ecNumber evidence="1">6.3.1.5</ecNumber>
    </recommendedName>
</protein>
<name>NADE_FINM2</name>
<feature type="chain" id="PRO_1000099022" description="NH(3)-dependent NAD(+) synthetase">
    <location>
        <begin position="1"/>
        <end position="241"/>
    </location>
</feature>
<feature type="binding site" evidence="1">
    <location>
        <begin position="29"/>
        <end position="36"/>
    </location>
    <ligand>
        <name>ATP</name>
        <dbReference type="ChEBI" id="CHEBI:30616"/>
    </ligand>
</feature>
<feature type="binding site" evidence="1">
    <location>
        <position position="35"/>
    </location>
    <ligand>
        <name>Mg(2+)</name>
        <dbReference type="ChEBI" id="CHEBI:18420"/>
    </ligand>
</feature>
<feature type="binding site" evidence="1">
    <location>
        <position position="110"/>
    </location>
    <ligand>
        <name>deamido-NAD(+)</name>
        <dbReference type="ChEBI" id="CHEBI:58437"/>
    </ligand>
</feature>
<feature type="binding site" evidence="1">
    <location>
        <position position="135"/>
    </location>
    <ligand>
        <name>Mg(2+)</name>
        <dbReference type="ChEBI" id="CHEBI:18420"/>
    </ligand>
</feature>
<feature type="binding site" evidence="1">
    <location>
        <position position="143"/>
    </location>
    <ligand>
        <name>deamido-NAD(+)</name>
        <dbReference type="ChEBI" id="CHEBI:58437"/>
    </ligand>
</feature>
<feature type="binding site" evidence="1">
    <location>
        <position position="150"/>
    </location>
    <ligand>
        <name>deamido-NAD(+)</name>
        <dbReference type="ChEBI" id="CHEBI:58437"/>
    </ligand>
</feature>
<feature type="binding site" evidence="1">
    <location>
        <position position="159"/>
    </location>
    <ligand>
        <name>ATP</name>
        <dbReference type="ChEBI" id="CHEBI:30616"/>
    </ligand>
</feature>
<feature type="binding site" evidence="1">
    <location>
        <position position="181"/>
    </location>
    <ligand>
        <name>ATP</name>
        <dbReference type="ChEBI" id="CHEBI:30616"/>
    </ligand>
</feature>
<feature type="binding site" evidence="1">
    <location>
        <begin position="226"/>
        <end position="227"/>
    </location>
    <ligand>
        <name>deamido-NAD(+)</name>
        <dbReference type="ChEBI" id="CHEBI:58437"/>
    </ligand>
</feature>
<proteinExistence type="inferred from homology"/>
<evidence type="ECO:0000255" key="1">
    <source>
        <dbReference type="HAMAP-Rule" id="MF_00193"/>
    </source>
</evidence>
<comment type="function">
    <text evidence="1">Catalyzes the ATP-dependent amidation of deamido-NAD to form NAD. Uses ammonia as a nitrogen source.</text>
</comment>
<comment type="catalytic activity">
    <reaction evidence="1">
        <text>deamido-NAD(+) + NH4(+) + ATP = AMP + diphosphate + NAD(+) + H(+)</text>
        <dbReference type="Rhea" id="RHEA:21188"/>
        <dbReference type="ChEBI" id="CHEBI:15378"/>
        <dbReference type="ChEBI" id="CHEBI:28938"/>
        <dbReference type="ChEBI" id="CHEBI:30616"/>
        <dbReference type="ChEBI" id="CHEBI:33019"/>
        <dbReference type="ChEBI" id="CHEBI:57540"/>
        <dbReference type="ChEBI" id="CHEBI:58437"/>
        <dbReference type="ChEBI" id="CHEBI:456215"/>
        <dbReference type="EC" id="6.3.1.5"/>
    </reaction>
</comment>
<comment type="pathway">
    <text evidence="1">Cofactor biosynthesis; NAD(+) biosynthesis; NAD(+) from deamido-NAD(+) (ammonia route): step 1/1.</text>
</comment>
<comment type="subunit">
    <text evidence="1">Homodimer.</text>
</comment>
<comment type="similarity">
    <text evidence="1">Belongs to the NAD synthetase family.</text>
</comment>
<dbReference type="EC" id="6.3.1.5" evidence="1"/>
<dbReference type="EMBL" id="AP008971">
    <property type="protein sequence ID" value="BAG08312.1"/>
    <property type="molecule type" value="Genomic_DNA"/>
</dbReference>
<dbReference type="RefSeq" id="WP_012290695.1">
    <property type="nucleotide sequence ID" value="NC_010376.1"/>
</dbReference>
<dbReference type="SMR" id="B0S1S2"/>
<dbReference type="STRING" id="334413.FMG_0894"/>
<dbReference type="KEGG" id="fma:FMG_0894"/>
<dbReference type="eggNOG" id="COG0171">
    <property type="taxonomic scope" value="Bacteria"/>
</dbReference>
<dbReference type="HOGENOM" id="CLU_059327_1_1_9"/>
<dbReference type="UniPathway" id="UPA00253">
    <property type="reaction ID" value="UER00333"/>
</dbReference>
<dbReference type="Proteomes" id="UP000001319">
    <property type="component" value="Chromosome"/>
</dbReference>
<dbReference type="GO" id="GO:0005737">
    <property type="term" value="C:cytoplasm"/>
    <property type="evidence" value="ECO:0007669"/>
    <property type="project" value="InterPro"/>
</dbReference>
<dbReference type="GO" id="GO:0005524">
    <property type="term" value="F:ATP binding"/>
    <property type="evidence" value="ECO:0007669"/>
    <property type="project" value="UniProtKB-UniRule"/>
</dbReference>
<dbReference type="GO" id="GO:0004359">
    <property type="term" value="F:glutaminase activity"/>
    <property type="evidence" value="ECO:0007669"/>
    <property type="project" value="InterPro"/>
</dbReference>
<dbReference type="GO" id="GO:0046872">
    <property type="term" value="F:metal ion binding"/>
    <property type="evidence" value="ECO:0007669"/>
    <property type="project" value="UniProtKB-KW"/>
</dbReference>
<dbReference type="GO" id="GO:0003952">
    <property type="term" value="F:NAD+ synthase (glutamine-hydrolyzing) activity"/>
    <property type="evidence" value="ECO:0007669"/>
    <property type="project" value="InterPro"/>
</dbReference>
<dbReference type="GO" id="GO:0008795">
    <property type="term" value="F:NAD+ synthase activity"/>
    <property type="evidence" value="ECO:0007669"/>
    <property type="project" value="UniProtKB-UniRule"/>
</dbReference>
<dbReference type="GO" id="GO:0009435">
    <property type="term" value="P:NAD biosynthetic process"/>
    <property type="evidence" value="ECO:0007669"/>
    <property type="project" value="UniProtKB-UniRule"/>
</dbReference>
<dbReference type="CDD" id="cd00553">
    <property type="entry name" value="NAD_synthase"/>
    <property type="match status" value="1"/>
</dbReference>
<dbReference type="Gene3D" id="3.40.50.620">
    <property type="entry name" value="HUPs"/>
    <property type="match status" value="1"/>
</dbReference>
<dbReference type="HAMAP" id="MF_00193">
    <property type="entry name" value="NadE_ammonia_dep"/>
    <property type="match status" value="1"/>
</dbReference>
<dbReference type="InterPro" id="IPR022310">
    <property type="entry name" value="NAD/GMP_synthase"/>
</dbReference>
<dbReference type="InterPro" id="IPR003694">
    <property type="entry name" value="NAD_synthase"/>
</dbReference>
<dbReference type="InterPro" id="IPR022926">
    <property type="entry name" value="NH(3)-dep_NAD(+)_synth"/>
</dbReference>
<dbReference type="InterPro" id="IPR014729">
    <property type="entry name" value="Rossmann-like_a/b/a_fold"/>
</dbReference>
<dbReference type="NCBIfam" id="TIGR00552">
    <property type="entry name" value="nadE"/>
    <property type="match status" value="1"/>
</dbReference>
<dbReference type="PANTHER" id="PTHR23090:SF9">
    <property type="entry name" value="GLUTAMINE-DEPENDENT NAD(+) SYNTHETASE"/>
    <property type="match status" value="1"/>
</dbReference>
<dbReference type="PANTHER" id="PTHR23090">
    <property type="entry name" value="NH 3 /GLUTAMINE-DEPENDENT NAD + SYNTHETASE"/>
    <property type="match status" value="1"/>
</dbReference>
<dbReference type="Pfam" id="PF02540">
    <property type="entry name" value="NAD_synthase"/>
    <property type="match status" value="1"/>
</dbReference>
<dbReference type="SUPFAM" id="SSF52402">
    <property type="entry name" value="Adenine nucleotide alpha hydrolases-like"/>
    <property type="match status" value="1"/>
</dbReference>
<reference key="1">
    <citation type="journal article" date="2008" name="DNA Res.">
        <title>Complete genome sequence of Finegoldia magna, an anaerobic opportunistic pathogen.</title>
        <authorList>
            <person name="Goto T."/>
            <person name="Yamashita A."/>
            <person name="Hirakawa H."/>
            <person name="Matsutani M."/>
            <person name="Todo K."/>
            <person name="Ohshima K."/>
            <person name="Toh H."/>
            <person name="Miyamoto K."/>
            <person name="Kuhara S."/>
            <person name="Hattori M."/>
            <person name="Shimizu T."/>
            <person name="Akimoto S."/>
        </authorList>
    </citation>
    <scope>NUCLEOTIDE SEQUENCE [LARGE SCALE GENOMIC DNA]</scope>
    <source>
        <strain>ATCC 29328 / DSM 20472 / WAL 2508</strain>
    </source>
</reference>
<keyword id="KW-0067">ATP-binding</keyword>
<keyword id="KW-0436">Ligase</keyword>
<keyword id="KW-0460">Magnesium</keyword>
<keyword id="KW-0479">Metal-binding</keyword>
<keyword id="KW-0520">NAD</keyword>
<keyword id="KW-0547">Nucleotide-binding</keyword>
<keyword id="KW-1185">Reference proteome</keyword>
<sequence length="241" mass="27246">MNYAKLCEDLTKWIKEEVESANLKGAVFGISGGIDSAVLACLCKKAFGDNALGLIMPIKSNPKDEEDARILAKSIGLRFTKVDLNESYDALIGTFEKNSVEMAASNIKPRLRMITLYYYAQNNGYMVLSGSNRSEFMTGYFTKYGDSGADLMPLLNLYKTDIFEMAKVLGVPDVIINKKPSAGLWEGQTDEDEFGFTYEELDDYLMNNSNTKSKDLIDKKIKQSEHKRKFAKSFEFDRRNY</sequence>
<accession>B0S1S2</accession>
<gene>
    <name evidence="1" type="primary">nadE</name>
    <name type="ordered locus">FMG_0894</name>
</gene>
<organism>
    <name type="scientific">Finegoldia magna (strain ATCC 29328 / DSM 20472 / WAL 2508)</name>
    <name type="common">Peptostreptococcus magnus</name>
    <dbReference type="NCBI Taxonomy" id="334413"/>
    <lineage>
        <taxon>Bacteria</taxon>
        <taxon>Bacillati</taxon>
        <taxon>Bacillota</taxon>
        <taxon>Tissierellia</taxon>
        <taxon>Tissierellales</taxon>
        <taxon>Peptoniphilaceae</taxon>
        <taxon>Finegoldia</taxon>
    </lineage>
</organism>